<proteinExistence type="inferred from homology"/>
<accession>Q5WZM3</accession>
<feature type="chain" id="PRO_0000104304" description="Large ribosomal subunit protein uL11">
    <location>
        <begin position="1"/>
        <end position="144"/>
    </location>
</feature>
<sequence length="144" mass="15090">MAKKVEAYIKLQIPAGKANPSPPVGPALGQRGVNIMEFCKAFNAATQQMEQGLPIPVVITVYSDRSFTFITKTPPASVLLKKAAGIQSGSGTPNTKKVAKLNVSQLEEIAKVKKPDLTAADLAAAVRSIAGTARSMGIEVEGLE</sequence>
<dbReference type="EMBL" id="CR628337">
    <property type="protein sequence ID" value="CAH14589.1"/>
    <property type="molecule type" value="Genomic_DNA"/>
</dbReference>
<dbReference type="RefSeq" id="WP_010946069.1">
    <property type="nucleotide sequence ID" value="NC_006369.1"/>
</dbReference>
<dbReference type="SMR" id="Q5WZM3"/>
<dbReference type="GeneID" id="57034321"/>
<dbReference type="KEGG" id="lpf:lpl0358"/>
<dbReference type="LegioList" id="lpl0358"/>
<dbReference type="HOGENOM" id="CLU_074237_2_0_6"/>
<dbReference type="Proteomes" id="UP000002517">
    <property type="component" value="Chromosome"/>
</dbReference>
<dbReference type="GO" id="GO:0022625">
    <property type="term" value="C:cytosolic large ribosomal subunit"/>
    <property type="evidence" value="ECO:0007669"/>
    <property type="project" value="TreeGrafter"/>
</dbReference>
<dbReference type="GO" id="GO:0070180">
    <property type="term" value="F:large ribosomal subunit rRNA binding"/>
    <property type="evidence" value="ECO:0007669"/>
    <property type="project" value="UniProtKB-UniRule"/>
</dbReference>
<dbReference type="GO" id="GO:0003735">
    <property type="term" value="F:structural constituent of ribosome"/>
    <property type="evidence" value="ECO:0007669"/>
    <property type="project" value="InterPro"/>
</dbReference>
<dbReference type="GO" id="GO:0006412">
    <property type="term" value="P:translation"/>
    <property type="evidence" value="ECO:0007669"/>
    <property type="project" value="UniProtKB-UniRule"/>
</dbReference>
<dbReference type="CDD" id="cd00349">
    <property type="entry name" value="Ribosomal_L11"/>
    <property type="match status" value="1"/>
</dbReference>
<dbReference type="FunFam" id="1.10.10.250:FF:000001">
    <property type="entry name" value="50S ribosomal protein L11"/>
    <property type="match status" value="1"/>
</dbReference>
<dbReference type="FunFam" id="3.30.1550.10:FF:000001">
    <property type="entry name" value="50S ribosomal protein L11"/>
    <property type="match status" value="1"/>
</dbReference>
<dbReference type="Gene3D" id="1.10.10.250">
    <property type="entry name" value="Ribosomal protein L11, C-terminal domain"/>
    <property type="match status" value="1"/>
</dbReference>
<dbReference type="Gene3D" id="3.30.1550.10">
    <property type="entry name" value="Ribosomal protein L11/L12, N-terminal domain"/>
    <property type="match status" value="1"/>
</dbReference>
<dbReference type="HAMAP" id="MF_00736">
    <property type="entry name" value="Ribosomal_uL11"/>
    <property type="match status" value="1"/>
</dbReference>
<dbReference type="InterPro" id="IPR000911">
    <property type="entry name" value="Ribosomal_uL11"/>
</dbReference>
<dbReference type="InterPro" id="IPR006519">
    <property type="entry name" value="Ribosomal_uL11_bac-typ"/>
</dbReference>
<dbReference type="InterPro" id="IPR020783">
    <property type="entry name" value="Ribosomal_uL11_C"/>
</dbReference>
<dbReference type="InterPro" id="IPR036769">
    <property type="entry name" value="Ribosomal_uL11_C_sf"/>
</dbReference>
<dbReference type="InterPro" id="IPR020785">
    <property type="entry name" value="Ribosomal_uL11_CS"/>
</dbReference>
<dbReference type="InterPro" id="IPR020784">
    <property type="entry name" value="Ribosomal_uL11_N"/>
</dbReference>
<dbReference type="InterPro" id="IPR036796">
    <property type="entry name" value="Ribosomal_uL11_N_sf"/>
</dbReference>
<dbReference type="NCBIfam" id="TIGR01632">
    <property type="entry name" value="L11_bact"/>
    <property type="match status" value="1"/>
</dbReference>
<dbReference type="PANTHER" id="PTHR11661">
    <property type="entry name" value="60S RIBOSOMAL PROTEIN L12"/>
    <property type="match status" value="1"/>
</dbReference>
<dbReference type="PANTHER" id="PTHR11661:SF1">
    <property type="entry name" value="LARGE RIBOSOMAL SUBUNIT PROTEIN UL11M"/>
    <property type="match status" value="1"/>
</dbReference>
<dbReference type="Pfam" id="PF00298">
    <property type="entry name" value="Ribosomal_L11"/>
    <property type="match status" value="1"/>
</dbReference>
<dbReference type="Pfam" id="PF03946">
    <property type="entry name" value="Ribosomal_L11_N"/>
    <property type="match status" value="1"/>
</dbReference>
<dbReference type="SMART" id="SM00649">
    <property type="entry name" value="RL11"/>
    <property type="match status" value="1"/>
</dbReference>
<dbReference type="SUPFAM" id="SSF54747">
    <property type="entry name" value="Ribosomal L11/L12e N-terminal domain"/>
    <property type="match status" value="1"/>
</dbReference>
<dbReference type="SUPFAM" id="SSF46906">
    <property type="entry name" value="Ribosomal protein L11, C-terminal domain"/>
    <property type="match status" value="1"/>
</dbReference>
<dbReference type="PROSITE" id="PS00359">
    <property type="entry name" value="RIBOSOMAL_L11"/>
    <property type="match status" value="1"/>
</dbReference>
<gene>
    <name evidence="1" type="primary">rplK</name>
    <name type="ordered locus">lpl0358</name>
</gene>
<comment type="function">
    <text evidence="1">Forms part of the ribosomal stalk which helps the ribosome interact with GTP-bound translation factors.</text>
</comment>
<comment type="subunit">
    <text evidence="1">Part of the ribosomal stalk of the 50S ribosomal subunit. Interacts with L10 and the large rRNA to form the base of the stalk. L10 forms an elongated spine to which L12 dimers bind in a sequential fashion forming a multimeric L10(L12)X complex.</text>
</comment>
<comment type="PTM">
    <text evidence="1">One or more lysine residues are methylated.</text>
</comment>
<comment type="similarity">
    <text evidence="1">Belongs to the universal ribosomal protein uL11 family.</text>
</comment>
<keyword id="KW-0488">Methylation</keyword>
<keyword id="KW-0687">Ribonucleoprotein</keyword>
<keyword id="KW-0689">Ribosomal protein</keyword>
<keyword id="KW-0694">RNA-binding</keyword>
<keyword id="KW-0699">rRNA-binding</keyword>
<organism>
    <name type="scientific">Legionella pneumophila (strain Lens)</name>
    <dbReference type="NCBI Taxonomy" id="297245"/>
    <lineage>
        <taxon>Bacteria</taxon>
        <taxon>Pseudomonadati</taxon>
        <taxon>Pseudomonadota</taxon>
        <taxon>Gammaproteobacteria</taxon>
        <taxon>Legionellales</taxon>
        <taxon>Legionellaceae</taxon>
        <taxon>Legionella</taxon>
    </lineage>
</organism>
<name>RL11_LEGPL</name>
<reference key="1">
    <citation type="journal article" date="2004" name="Nat. Genet.">
        <title>Evidence in the Legionella pneumophila genome for exploitation of host cell functions and high genome plasticity.</title>
        <authorList>
            <person name="Cazalet C."/>
            <person name="Rusniok C."/>
            <person name="Brueggemann H."/>
            <person name="Zidane N."/>
            <person name="Magnier A."/>
            <person name="Ma L."/>
            <person name="Tichit M."/>
            <person name="Jarraud S."/>
            <person name="Bouchier C."/>
            <person name="Vandenesch F."/>
            <person name="Kunst F."/>
            <person name="Etienne J."/>
            <person name="Glaser P."/>
            <person name="Buchrieser C."/>
        </authorList>
    </citation>
    <scope>NUCLEOTIDE SEQUENCE [LARGE SCALE GENOMIC DNA]</scope>
    <source>
        <strain>Lens</strain>
    </source>
</reference>
<evidence type="ECO:0000255" key="1">
    <source>
        <dbReference type="HAMAP-Rule" id="MF_00736"/>
    </source>
</evidence>
<evidence type="ECO:0000305" key="2"/>
<protein>
    <recommendedName>
        <fullName evidence="1">Large ribosomal subunit protein uL11</fullName>
    </recommendedName>
    <alternativeName>
        <fullName evidence="2">50S ribosomal protein L11</fullName>
    </alternativeName>
</protein>